<proteinExistence type="inferred from homology"/>
<organism>
    <name type="scientific">Escherichia coli O8 (strain IAI1)</name>
    <dbReference type="NCBI Taxonomy" id="585034"/>
    <lineage>
        <taxon>Bacteria</taxon>
        <taxon>Pseudomonadati</taxon>
        <taxon>Pseudomonadota</taxon>
        <taxon>Gammaproteobacteria</taxon>
        <taxon>Enterobacterales</taxon>
        <taxon>Enterobacteriaceae</taxon>
        <taxon>Escherichia</taxon>
    </lineage>
</organism>
<keyword id="KW-0963">Cytoplasm</keyword>
<keyword id="KW-0489">Methyltransferase</keyword>
<keyword id="KW-0698">rRNA processing</keyword>
<keyword id="KW-0949">S-adenosyl-L-methionine</keyword>
<keyword id="KW-0808">Transferase</keyword>
<accession>B7M5G3</accession>
<protein>
    <recommendedName>
        <fullName evidence="1">Ribosomal RNA large subunit methyltransferase H</fullName>
        <ecNumber evidence="1">2.1.1.177</ecNumber>
    </recommendedName>
    <alternativeName>
        <fullName evidence="1">23S rRNA (pseudouridine1915-N3)-methyltransferase</fullName>
    </alternativeName>
    <alternativeName>
        <fullName evidence="1">23S rRNA m3Psi1915 methyltransferase</fullName>
    </alternativeName>
    <alternativeName>
        <fullName evidence="1">rRNA (pseudouridine-N3-)-methyltransferase RlmH</fullName>
    </alternativeName>
</protein>
<name>RLMH_ECO8A</name>
<feature type="chain" id="PRO_1000131231" description="Ribosomal RNA large subunit methyltransferase H">
    <location>
        <begin position="1"/>
        <end position="155"/>
    </location>
</feature>
<feature type="binding site" evidence="1">
    <location>
        <position position="72"/>
    </location>
    <ligand>
        <name>S-adenosyl-L-methionine</name>
        <dbReference type="ChEBI" id="CHEBI:59789"/>
    </ligand>
</feature>
<feature type="binding site" evidence="1">
    <location>
        <position position="103"/>
    </location>
    <ligand>
        <name>S-adenosyl-L-methionine</name>
        <dbReference type="ChEBI" id="CHEBI:59789"/>
    </ligand>
</feature>
<feature type="binding site" evidence="1">
    <location>
        <begin position="122"/>
        <end position="127"/>
    </location>
    <ligand>
        <name>S-adenosyl-L-methionine</name>
        <dbReference type="ChEBI" id="CHEBI:59789"/>
    </ligand>
</feature>
<gene>
    <name evidence="1" type="primary">rlmH</name>
    <name type="ordered locus">ECIAI1_0620</name>
</gene>
<reference key="1">
    <citation type="journal article" date="2009" name="PLoS Genet.">
        <title>Organised genome dynamics in the Escherichia coli species results in highly diverse adaptive paths.</title>
        <authorList>
            <person name="Touchon M."/>
            <person name="Hoede C."/>
            <person name="Tenaillon O."/>
            <person name="Barbe V."/>
            <person name="Baeriswyl S."/>
            <person name="Bidet P."/>
            <person name="Bingen E."/>
            <person name="Bonacorsi S."/>
            <person name="Bouchier C."/>
            <person name="Bouvet O."/>
            <person name="Calteau A."/>
            <person name="Chiapello H."/>
            <person name="Clermont O."/>
            <person name="Cruveiller S."/>
            <person name="Danchin A."/>
            <person name="Diard M."/>
            <person name="Dossat C."/>
            <person name="Karoui M.E."/>
            <person name="Frapy E."/>
            <person name="Garry L."/>
            <person name="Ghigo J.M."/>
            <person name="Gilles A.M."/>
            <person name="Johnson J."/>
            <person name="Le Bouguenec C."/>
            <person name="Lescat M."/>
            <person name="Mangenot S."/>
            <person name="Martinez-Jehanne V."/>
            <person name="Matic I."/>
            <person name="Nassif X."/>
            <person name="Oztas S."/>
            <person name="Petit M.A."/>
            <person name="Pichon C."/>
            <person name="Rouy Z."/>
            <person name="Ruf C.S."/>
            <person name="Schneider D."/>
            <person name="Tourret J."/>
            <person name="Vacherie B."/>
            <person name="Vallenet D."/>
            <person name="Medigue C."/>
            <person name="Rocha E.P.C."/>
            <person name="Denamur E."/>
        </authorList>
    </citation>
    <scope>NUCLEOTIDE SEQUENCE [LARGE SCALE GENOMIC DNA]</scope>
    <source>
        <strain>IAI1</strain>
    </source>
</reference>
<comment type="function">
    <text evidence="1">Specifically methylates the pseudouridine at position 1915 (m3Psi1915) in 23S rRNA.</text>
</comment>
<comment type="catalytic activity">
    <reaction evidence="1">
        <text>pseudouridine(1915) in 23S rRNA + S-adenosyl-L-methionine = N(3)-methylpseudouridine(1915) in 23S rRNA + S-adenosyl-L-homocysteine + H(+)</text>
        <dbReference type="Rhea" id="RHEA:42752"/>
        <dbReference type="Rhea" id="RHEA-COMP:10221"/>
        <dbReference type="Rhea" id="RHEA-COMP:10222"/>
        <dbReference type="ChEBI" id="CHEBI:15378"/>
        <dbReference type="ChEBI" id="CHEBI:57856"/>
        <dbReference type="ChEBI" id="CHEBI:59789"/>
        <dbReference type="ChEBI" id="CHEBI:65314"/>
        <dbReference type="ChEBI" id="CHEBI:74486"/>
        <dbReference type="EC" id="2.1.1.177"/>
    </reaction>
</comment>
<comment type="subunit">
    <text evidence="1">Homodimer.</text>
</comment>
<comment type="subcellular location">
    <subcellularLocation>
        <location evidence="1">Cytoplasm</location>
    </subcellularLocation>
</comment>
<comment type="similarity">
    <text evidence="1">Belongs to the RNA methyltransferase RlmH family.</text>
</comment>
<dbReference type="EC" id="2.1.1.177" evidence="1"/>
<dbReference type="EMBL" id="CU928160">
    <property type="protein sequence ID" value="CAQ97490.1"/>
    <property type="molecule type" value="Genomic_DNA"/>
</dbReference>
<dbReference type="RefSeq" id="WP_000776104.1">
    <property type="nucleotide sequence ID" value="NC_011741.1"/>
</dbReference>
<dbReference type="SMR" id="B7M5G3"/>
<dbReference type="GeneID" id="93776846"/>
<dbReference type="KEGG" id="ecr:ECIAI1_0620"/>
<dbReference type="HOGENOM" id="CLU_100552_1_0_6"/>
<dbReference type="GO" id="GO:0005737">
    <property type="term" value="C:cytoplasm"/>
    <property type="evidence" value="ECO:0007669"/>
    <property type="project" value="UniProtKB-SubCell"/>
</dbReference>
<dbReference type="GO" id="GO:0070038">
    <property type="term" value="F:rRNA (pseudouridine-N3-)-methyltransferase activity"/>
    <property type="evidence" value="ECO:0007669"/>
    <property type="project" value="UniProtKB-UniRule"/>
</dbReference>
<dbReference type="CDD" id="cd18081">
    <property type="entry name" value="RlmH-like"/>
    <property type="match status" value="1"/>
</dbReference>
<dbReference type="FunFam" id="3.40.1280.10:FF:000004">
    <property type="entry name" value="Ribosomal RNA large subunit methyltransferase H"/>
    <property type="match status" value="1"/>
</dbReference>
<dbReference type="Gene3D" id="3.40.1280.10">
    <property type="match status" value="1"/>
</dbReference>
<dbReference type="HAMAP" id="MF_00658">
    <property type="entry name" value="23SrRNA_methyltr_H"/>
    <property type="match status" value="1"/>
</dbReference>
<dbReference type="InterPro" id="IPR029028">
    <property type="entry name" value="Alpha/beta_knot_MTases"/>
</dbReference>
<dbReference type="InterPro" id="IPR003742">
    <property type="entry name" value="RlmH-like"/>
</dbReference>
<dbReference type="InterPro" id="IPR029026">
    <property type="entry name" value="tRNA_m1G_MTases_N"/>
</dbReference>
<dbReference type="NCBIfam" id="NF000984">
    <property type="entry name" value="PRK00103.1-1"/>
    <property type="match status" value="1"/>
</dbReference>
<dbReference type="NCBIfam" id="NF000986">
    <property type="entry name" value="PRK00103.1-4"/>
    <property type="match status" value="1"/>
</dbReference>
<dbReference type="NCBIfam" id="TIGR00246">
    <property type="entry name" value="tRNA_RlmH_YbeA"/>
    <property type="match status" value="1"/>
</dbReference>
<dbReference type="PANTHER" id="PTHR33603">
    <property type="entry name" value="METHYLTRANSFERASE"/>
    <property type="match status" value="1"/>
</dbReference>
<dbReference type="PANTHER" id="PTHR33603:SF1">
    <property type="entry name" value="RIBOSOMAL RNA LARGE SUBUNIT METHYLTRANSFERASE H"/>
    <property type="match status" value="1"/>
</dbReference>
<dbReference type="Pfam" id="PF02590">
    <property type="entry name" value="SPOUT_MTase"/>
    <property type="match status" value="1"/>
</dbReference>
<dbReference type="PIRSF" id="PIRSF004505">
    <property type="entry name" value="MT_bac"/>
    <property type="match status" value="1"/>
</dbReference>
<dbReference type="SUPFAM" id="SSF75217">
    <property type="entry name" value="alpha/beta knot"/>
    <property type="match status" value="1"/>
</dbReference>
<sequence>MKLQLVAVGTKMPDWVQTGFTEYLRRFPKDMPFELIEIPAGKRGKNADIKRILDKEGEQMLAAAGKNRIVTLDIPGKPWDTPQLAAELERWKLDGRDVSLLIGGPEGLSPACKAAAEQSWSLSALTLPHPLVRVLVAESLYRAWSITTNHPYHRE</sequence>
<evidence type="ECO:0000255" key="1">
    <source>
        <dbReference type="HAMAP-Rule" id="MF_00658"/>
    </source>
</evidence>